<keyword id="KW-0963">Cytoplasm</keyword>
<keyword id="KW-0238">DNA-binding</keyword>
<keyword id="KW-0520">NAD</keyword>
<keyword id="KW-1185">Reference proteome</keyword>
<keyword id="KW-0678">Repressor</keyword>
<keyword id="KW-0804">Transcription</keyword>
<keyword id="KW-0805">Transcription regulation</keyword>
<name>REX_RHOBA</name>
<feature type="chain" id="PRO_0000097902" description="Redox-sensing transcriptional repressor Rex">
    <location>
        <begin position="1"/>
        <end position="237"/>
    </location>
</feature>
<feature type="DNA-binding region" description="H-T-H motif" evidence="1">
    <location>
        <begin position="45"/>
        <end position="84"/>
    </location>
</feature>
<feature type="binding site" evidence="1">
    <location>
        <begin position="119"/>
        <end position="124"/>
    </location>
    <ligand>
        <name>NAD(+)</name>
        <dbReference type="ChEBI" id="CHEBI:57540"/>
    </ligand>
</feature>
<dbReference type="EMBL" id="BX294136">
    <property type="protein sequence ID" value="CAD72510.1"/>
    <property type="molecule type" value="Genomic_DNA"/>
</dbReference>
<dbReference type="RefSeq" id="NP_864826.1">
    <property type="nucleotide sequence ID" value="NC_005027.1"/>
</dbReference>
<dbReference type="SMR" id="Q7UW59"/>
<dbReference type="STRING" id="243090.RB2253"/>
<dbReference type="EnsemblBacteria" id="CAD72510">
    <property type="protein sequence ID" value="CAD72510"/>
    <property type="gene ID" value="RB2253"/>
</dbReference>
<dbReference type="KEGG" id="rba:RB2253"/>
<dbReference type="PATRIC" id="fig|243090.15.peg.1028"/>
<dbReference type="eggNOG" id="COG2344">
    <property type="taxonomic scope" value="Bacteria"/>
</dbReference>
<dbReference type="HOGENOM" id="CLU_061534_1_0_0"/>
<dbReference type="InParanoid" id="Q7UW59"/>
<dbReference type="OrthoDB" id="9784760at2"/>
<dbReference type="Proteomes" id="UP000001025">
    <property type="component" value="Chromosome"/>
</dbReference>
<dbReference type="GO" id="GO:0005737">
    <property type="term" value="C:cytoplasm"/>
    <property type="evidence" value="ECO:0007669"/>
    <property type="project" value="UniProtKB-SubCell"/>
</dbReference>
<dbReference type="GO" id="GO:0003677">
    <property type="term" value="F:DNA binding"/>
    <property type="evidence" value="ECO:0007669"/>
    <property type="project" value="UniProtKB-UniRule"/>
</dbReference>
<dbReference type="GO" id="GO:0003700">
    <property type="term" value="F:DNA-binding transcription factor activity"/>
    <property type="evidence" value="ECO:0007669"/>
    <property type="project" value="UniProtKB-UniRule"/>
</dbReference>
<dbReference type="GO" id="GO:0045892">
    <property type="term" value="P:negative regulation of DNA-templated transcription"/>
    <property type="evidence" value="ECO:0007669"/>
    <property type="project" value="InterPro"/>
</dbReference>
<dbReference type="GO" id="GO:0051775">
    <property type="term" value="P:response to redox state"/>
    <property type="evidence" value="ECO:0007669"/>
    <property type="project" value="InterPro"/>
</dbReference>
<dbReference type="Gene3D" id="3.40.50.720">
    <property type="entry name" value="NAD(P)-binding Rossmann-like Domain"/>
    <property type="match status" value="1"/>
</dbReference>
<dbReference type="Gene3D" id="1.10.10.10">
    <property type="entry name" value="Winged helix-like DNA-binding domain superfamily/Winged helix DNA-binding domain"/>
    <property type="match status" value="1"/>
</dbReference>
<dbReference type="HAMAP" id="MF_01131">
    <property type="entry name" value="Rex"/>
    <property type="match status" value="1"/>
</dbReference>
<dbReference type="InterPro" id="IPR003781">
    <property type="entry name" value="CoA-bd"/>
</dbReference>
<dbReference type="InterPro" id="IPR036291">
    <property type="entry name" value="NAD(P)-bd_dom_sf"/>
</dbReference>
<dbReference type="InterPro" id="IPR009718">
    <property type="entry name" value="Rex_DNA-bd_C_dom"/>
</dbReference>
<dbReference type="InterPro" id="IPR022876">
    <property type="entry name" value="Tscrpt_rep_Rex"/>
</dbReference>
<dbReference type="InterPro" id="IPR036388">
    <property type="entry name" value="WH-like_DNA-bd_sf"/>
</dbReference>
<dbReference type="InterPro" id="IPR036390">
    <property type="entry name" value="WH_DNA-bd_sf"/>
</dbReference>
<dbReference type="NCBIfam" id="NF003992">
    <property type="entry name" value="PRK05472.2-1"/>
    <property type="match status" value="1"/>
</dbReference>
<dbReference type="NCBIfam" id="NF003994">
    <property type="entry name" value="PRK05472.2-3"/>
    <property type="match status" value="1"/>
</dbReference>
<dbReference type="NCBIfam" id="NF003995">
    <property type="entry name" value="PRK05472.2-4"/>
    <property type="match status" value="1"/>
</dbReference>
<dbReference type="NCBIfam" id="NF003996">
    <property type="entry name" value="PRK05472.2-5"/>
    <property type="match status" value="1"/>
</dbReference>
<dbReference type="PANTHER" id="PTHR35786">
    <property type="entry name" value="REDOX-SENSING TRANSCRIPTIONAL REPRESSOR REX"/>
    <property type="match status" value="1"/>
</dbReference>
<dbReference type="PANTHER" id="PTHR35786:SF1">
    <property type="entry name" value="REDOX-SENSING TRANSCRIPTIONAL REPRESSOR REX 1"/>
    <property type="match status" value="1"/>
</dbReference>
<dbReference type="Pfam" id="PF02629">
    <property type="entry name" value="CoA_binding"/>
    <property type="match status" value="1"/>
</dbReference>
<dbReference type="Pfam" id="PF06971">
    <property type="entry name" value="Put_DNA-bind_N"/>
    <property type="match status" value="1"/>
</dbReference>
<dbReference type="SMART" id="SM00881">
    <property type="entry name" value="CoA_binding"/>
    <property type="match status" value="1"/>
</dbReference>
<dbReference type="SUPFAM" id="SSF51735">
    <property type="entry name" value="NAD(P)-binding Rossmann-fold domains"/>
    <property type="match status" value="1"/>
</dbReference>
<dbReference type="SUPFAM" id="SSF46785">
    <property type="entry name" value="Winged helix' DNA-binding domain"/>
    <property type="match status" value="1"/>
</dbReference>
<comment type="function">
    <text evidence="1">Modulates transcription in response to changes in cellular NADH/NAD(+) redox state.</text>
</comment>
<comment type="subunit">
    <text evidence="1">Homodimer.</text>
</comment>
<comment type="subcellular location">
    <subcellularLocation>
        <location evidence="1">Cytoplasm</location>
    </subcellularLocation>
</comment>
<comment type="similarity">
    <text evidence="1">Belongs to the transcriptional regulatory Rex family.</text>
</comment>
<evidence type="ECO:0000255" key="1">
    <source>
        <dbReference type="HAMAP-Rule" id="MF_01131"/>
    </source>
</evidence>
<reference key="1">
    <citation type="journal article" date="2003" name="Proc. Natl. Acad. Sci. U.S.A.">
        <title>Complete genome sequence of the marine planctomycete Pirellula sp. strain 1.</title>
        <authorList>
            <person name="Gloeckner F.O."/>
            <person name="Kube M."/>
            <person name="Bauer M."/>
            <person name="Teeling H."/>
            <person name="Lombardot T."/>
            <person name="Ludwig W."/>
            <person name="Gade D."/>
            <person name="Beck A."/>
            <person name="Borzym K."/>
            <person name="Heitmann K."/>
            <person name="Rabus R."/>
            <person name="Schlesner H."/>
            <person name="Amann R."/>
            <person name="Reinhardt R."/>
        </authorList>
    </citation>
    <scope>NUCLEOTIDE SEQUENCE [LARGE SCALE GENOMIC DNA]</scope>
    <source>
        <strain>DSM 10527 / NCIMB 13988 / SH1</strain>
    </source>
</reference>
<protein>
    <recommendedName>
        <fullName evidence="1">Redox-sensing transcriptional repressor Rex</fullName>
    </recommendedName>
</protein>
<accession>Q7UW59</accession>
<proteinExistence type="inferred from homology"/>
<organism>
    <name type="scientific">Rhodopirellula baltica (strain DSM 10527 / NCIMB 13988 / SH1)</name>
    <dbReference type="NCBI Taxonomy" id="243090"/>
    <lineage>
        <taxon>Bacteria</taxon>
        <taxon>Pseudomonadati</taxon>
        <taxon>Planctomycetota</taxon>
        <taxon>Planctomycetia</taxon>
        <taxon>Pirellulales</taxon>
        <taxon>Pirellulaceae</taxon>
        <taxon>Rhodopirellula</taxon>
    </lineage>
</organism>
<gene>
    <name evidence="1" type="primary">rex</name>
    <name type="ordered locus">RB2253</name>
</gene>
<sequence>MFQSQRLCGWIMNMNTDHETSDSGGSDEGDRRAELSTPAVGRLSLYYRELHRLLAAGESSTNSRDLGAMVNVSPAVVRRDLSSIGSIGRRGVGYDVAILAERIGAVLGSGVQWKAVLIGVGSLGNALLRYRGFERLGFSLAAAFDTDPAKYGHEVGGTTVRSLDDLEEVLATAKPELAILAVPSEQASQVATRVLAGGIQGILNFAPTTLRVPPGTAIINVDLASELQQLAFRIQNR</sequence>